<comment type="function">
    <text evidence="1">Catalyzes the covalent attachment of the prokaryotic ubiquitin-like protein modifier Pup to the proteasomal substrate proteins, thereby targeting them for proteasomal degradation. This tagging system is termed pupylation. The ligation reaction involves the side-chain carboxylate of the C-terminal glutamate of Pup and the side-chain amino group of a substrate lysine.</text>
</comment>
<comment type="catalytic activity">
    <reaction evidence="1">
        <text>ATP + [prokaryotic ubiquitin-like protein]-L-glutamate + [protein]-L-lysine = ADP + phosphate + N(6)-([prokaryotic ubiquitin-like protein]-gamma-L-glutamyl)-[protein]-L-lysine.</text>
        <dbReference type="EC" id="6.3.1.19"/>
    </reaction>
</comment>
<comment type="pathway">
    <text evidence="1">Protein degradation; proteasomal Pup-dependent pathway.</text>
</comment>
<comment type="pathway">
    <text evidence="1">Protein modification; protein pupylation.</text>
</comment>
<comment type="miscellaneous">
    <text evidence="1">The reaction mechanism probably proceeds via the activation of Pup by phosphorylation of its C-terminal glutamate, which is then subject to nucleophilic attack by the substrate lysine, resulting in an isopeptide bond and the release of phosphate as a good leaving group.</text>
</comment>
<comment type="similarity">
    <text evidence="1">Belongs to the Pup ligase/Pup deamidase family. Pup-conjugating enzyme subfamily.</text>
</comment>
<protein>
    <recommendedName>
        <fullName evidence="1">Pup--protein ligase</fullName>
        <ecNumber evidence="1">6.3.1.19</ecNumber>
    </recommendedName>
    <alternativeName>
        <fullName evidence="1">Proteasome accessory factor A</fullName>
    </alternativeName>
    <alternativeName>
        <fullName evidence="1">Pup-conjugating enzyme</fullName>
    </alternativeName>
</protein>
<accession>C0ZZU4</accession>
<evidence type="ECO:0000255" key="1">
    <source>
        <dbReference type="HAMAP-Rule" id="MF_02111"/>
    </source>
</evidence>
<reference key="1">
    <citation type="submission" date="2005-03" db="EMBL/GenBank/DDBJ databases">
        <title>Comparison of the complete genome sequences of Rhodococcus erythropolis PR4 and Rhodococcus opacus B4.</title>
        <authorList>
            <person name="Takarada H."/>
            <person name="Sekine M."/>
            <person name="Hosoyama A."/>
            <person name="Yamada R."/>
            <person name="Fujisawa T."/>
            <person name="Omata S."/>
            <person name="Shimizu A."/>
            <person name="Tsukatani N."/>
            <person name="Tanikawa S."/>
            <person name="Fujita N."/>
            <person name="Harayama S."/>
        </authorList>
    </citation>
    <scope>NUCLEOTIDE SEQUENCE [LARGE SCALE GENOMIC DNA]</scope>
    <source>
        <strain>PR4 / NBRC 100887</strain>
    </source>
</reference>
<gene>
    <name evidence="1" type="primary">pafA</name>
    <name type="ordered locus">RER_31710</name>
</gene>
<name>PAFA_RHOE4</name>
<keyword id="KW-0067">ATP-binding</keyword>
<keyword id="KW-0436">Ligase</keyword>
<keyword id="KW-0460">Magnesium</keyword>
<keyword id="KW-0479">Metal-binding</keyword>
<keyword id="KW-0547">Nucleotide-binding</keyword>
<keyword id="KW-0833">Ubl conjugation pathway</keyword>
<dbReference type="EC" id="6.3.1.19" evidence="1"/>
<dbReference type="EMBL" id="AP008957">
    <property type="protein sequence ID" value="BAH33879.1"/>
    <property type="molecule type" value="Genomic_DNA"/>
</dbReference>
<dbReference type="SMR" id="C0ZZU4"/>
<dbReference type="KEGG" id="rer:RER_31710"/>
<dbReference type="eggNOG" id="COG0638">
    <property type="taxonomic scope" value="Bacteria"/>
</dbReference>
<dbReference type="HOGENOM" id="CLU_040524_0_1_11"/>
<dbReference type="BRENDA" id="6.3.1.19">
    <property type="organism ID" value="5389"/>
</dbReference>
<dbReference type="UniPathway" id="UPA00997"/>
<dbReference type="UniPathway" id="UPA00998"/>
<dbReference type="Proteomes" id="UP000002204">
    <property type="component" value="Chromosome"/>
</dbReference>
<dbReference type="GO" id="GO:0005524">
    <property type="term" value="F:ATP binding"/>
    <property type="evidence" value="ECO:0007669"/>
    <property type="project" value="UniProtKB-UniRule"/>
</dbReference>
<dbReference type="GO" id="GO:0016879">
    <property type="term" value="F:ligase activity, forming carbon-nitrogen bonds"/>
    <property type="evidence" value="ECO:0007669"/>
    <property type="project" value="InterPro"/>
</dbReference>
<dbReference type="GO" id="GO:0000287">
    <property type="term" value="F:magnesium ion binding"/>
    <property type="evidence" value="ECO:0007669"/>
    <property type="project" value="UniProtKB-UniRule"/>
</dbReference>
<dbReference type="GO" id="GO:0019787">
    <property type="term" value="F:ubiquitin-like protein transferase activity"/>
    <property type="evidence" value="ECO:0007669"/>
    <property type="project" value="UniProtKB-UniRule"/>
</dbReference>
<dbReference type="GO" id="GO:0019941">
    <property type="term" value="P:modification-dependent protein catabolic process"/>
    <property type="evidence" value="ECO:0007669"/>
    <property type="project" value="UniProtKB-UniRule"/>
</dbReference>
<dbReference type="GO" id="GO:0010498">
    <property type="term" value="P:proteasomal protein catabolic process"/>
    <property type="evidence" value="ECO:0007669"/>
    <property type="project" value="UniProtKB-UniRule"/>
</dbReference>
<dbReference type="GO" id="GO:0070490">
    <property type="term" value="P:protein pupylation"/>
    <property type="evidence" value="ECO:0007669"/>
    <property type="project" value="UniProtKB-UniRule"/>
</dbReference>
<dbReference type="HAMAP" id="MF_02111">
    <property type="entry name" value="Pup_ligase"/>
    <property type="match status" value="1"/>
</dbReference>
<dbReference type="InterPro" id="IPR022279">
    <property type="entry name" value="Pup_ligase"/>
</dbReference>
<dbReference type="InterPro" id="IPR004347">
    <property type="entry name" value="Pup_ligase/deamidase"/>
</dbReference>
<dbReference type="NCBIfam" id="TIGR03686">
    <property type="entry name" value="pupylate_PafA"/>
    <property type="match status" value="1"/>
</dbReference>
<dbReference type="PANTHER" id="PTHR42307">
    <property type="entry name" value="PUP DEAMIDASE/DEPUPYLASE"/>
    <property type="match status" value="1"/>
</dbReference>
<dbReference type="PANTHER" id="PTHR42307:SF3">
    <property type="entry name" value="PUP--PROTEIN LIGASE"/>
    <property type="match status" value="1"/>
</dbReference>
<dbReference type="Pfam" id="PF03136">
    <property type="entry name" value="Pup_ligase"/>
    <property type="match status" value="1"/>
</dbReference>
<dbReference type="PIRSF" id="PIRSF018077">
    <property type="entry name" value="UCP018077"/>
    <property type="match status" value="1"/>
</dbReference>
<sequence>MQRRIMGIETEFGVTCTFHGHRRLSPDEVARYLFRRVVSWGRSSNVFLRNGARLYLDVGSHPEYATAECDSLIQLVNHDRAGERVLEELLIDAEARLAEEGIGGDIYLFKNNTDSAGNSYGCHENFLVARAGEFSRISDVLLPFLVTRQLICGAGKVLQTPKAATFCLSQRAEHIWEGVSSATTRSRPIINTRDEPHADAEKYRRLHVIVGDSNMAETTTMLKVGSAALVLEMIEAGVSFRDFALDNPIRAIREVSHDVTGKKPVRLAGGRQASALDIQREYHAKAVEHLRNREPDPQVEQVVDLWGRTLDAVEAQDFAKVDTEIDWVIKRKLFQRYQDRHGFDLSDPKIAQLDLAYHDIKRGRGVFDVLQRKGLVKRVTEDETIDDAVENPPQTTRAKLRGDFITAAQAAGRDFTVDWVHLKLNDQAQRTVLCKDPFRSVDERVERLIASM</sequence>
<proteinExistence type="inferred from homology"/>
<feature type="chain" id="PRO_0000395946" description="Pup--protein ligase">
    <location>
        <begin position="1"/>
        <end position="452"/>
    </location>
</feature>
<feature type="active site" description="Proton acceptor" evidence="1">
    <location>
        <position position="57"/>
    </location>
</feature>
<feature type="binding site" evidence="1">
    <location>
        <position position="9"/>
    </location>
    <ligand>
        <name>Mg(2+)</name>
        <dbReference type="ChEBI" id="CHEBI:18420"/>
    </ligand>
</feature>
<feature type="binding site" evidence="1">
    <location>
        <position position="53"/>
    </location>
    <ligand>
        <name>ATP</name>
        <dbReference type="ChEBI" id="CHEBI:30616"/>
    </ligand>
</feature>
<feature type="binding site" evidence="1">
    <location>
        <position position="55"/>
    </location>
    <ligand>
        <name>Mg(2+)</name>
        <dbReference type="ChEBI" id="CHEBI:18420"/>
    </ligand>
</feature>
<feature type="binding site" evidence="1">
    <location>
        <position position="63"/>
    </location>
    <ligand>
        <name>Mg(2+)</name>
        <dbReference type="ChEBI" id="CHEBI:18420"/>
    </ligand>
</feature>
<feature type="binding site" evidence="1">
    <location>
        <position position="66"/>
    </location>
    <ligand>
        <name>ATP</name>
        <dbReference type="ChEBI" id="CHEBI:30616"/>
    </ligand>
</feature>
<feature type="binding site" evidence="1">
    <location>
        <position position="419"/>
    </location>
    <ligand>
        <name>ATP</name>
        <dbReference type="ChEBI" id="CHEBI:30616"/>
    </ligand>
</feature>
<organism>
    <name type="scientific">Rhodococcus erythropolis (strain PR4 / NBRC 100887)</name>
    <dbReference type="NCBI Taxonomy" id="234621"/>
    <lineage>
        <taxon>Bacteria</taxon>
        <taxon>Bacillati</taxon>
        <taxon>Actinomycetota</taxon>
        <taxon>Actinomycetes</taxon>
        <taxon>Mycobacteriales</taxon>
        <taxon>Nocardiaceae</taxon>
        <taxon>Rhodococcus</taxon>
        <taxon>Rhodococcus erythropolis group</taxon>
    </lineage>
</organism>